<protein>
    <recommendedName>
        <fullName evidence="5">Periviscerokinin-2</fullName>
        <shortName evidence="5">Tarbi-PVK-2</shortName>
    </recommendedName>
</protein>
<organism>
    <name type="scientific">Tarachodes bispinosus</name>
    <name type="common">Praying mantis</name>
    <name type="synonym">Chiropus bispinosus</name>
    <dbReference type="NCBI Taxonomy" id="761653"/>
    <lineage>
        <taxon>Eukaryota</taxon>
        <taxon>Metazoa</taxon>
        <taxon>Ecdysozoa</taxon>
        <taxon>Arthropoda</taxon>
        <taxon>Hexapoda</taxon>
        <taxon>Insecta</taxon>
        <taxon>Pterygota</taxon>
        <taxon>Neoptera</taxon>
        <taxon>Polyneoptera</taxon>
        <taxon>Dictyoptera</taxon>
        <taxon>Mantodea</taxon>
        <taxon>Eumantodea</taxon>
        <taxon>Eremiaphiloidea</taxon>
        <taxon>Eremiaphilidae</taxon>
        <taxon>Tarachodinae</taxon>
        <taxon>Tarachodes</taxon>
    </lineage>
</organism>
<dbReference type="GO" id="GO:0005576">
    <property type="term" value="C:extracellular region"/>
    <property type="evidence" value="ECO:0007669"/>
    <property type="project" value="UniProtKB-SubCell"/>
</dbReference>
<dbReference type="GO" id="GO:0007218">
    <property type="term" value="P:neuropeptide signaling pathway"/>
    <property type="evidence" value="ECO:0007669"/>
    <property type="project" value="UniProtKB-KW"/>
</dbReference>
<dbReference type="InterPro" id="IPR013231">
    <property type="entry name" value="Periviscerokinin"/>
</dbReference>
<dbReference type="Pfam" id="PF08259">
    <property type="entry name" value="Periviscerokin"/>
    <property type="match status" value="1"/>
</dbReference>
<name>PVK2_TARBI</name>
<feature type="peptide" id="PRO_0000395597" description="Periviscerokinin-2" evidence="4">
    <location>
        <begin position="1"/>
        <end position="11"/>
    </location>
</feature>
<feature type="modified residue" description="Leucine amide" evidence="4">
    <location>
        <position position="11"/>
    </location>
</feature>
<feature type="unsure residue" description="L or I" evidence="4">
    <location>
        <position position="5"/>
    </location>
</feature>
<feature type="unsure residue" description="I or L" evidence="4">
    <location>
        <position position="6"/>
    </location>
</feature>
<feature type="unsure residue" description="L or I" evidence="4">
    <location>
        <position position="11"/>
    </location>
</feature>
<sequence>GASGLIAFPRL</sequence>
<proteinExistence type="evidence at protein level"/>
<reference evidence="6" key="1">
    <citation type="journal article" date="2010" name="Peptides">
        <title>CAPA-peptides of praying mantids (Mantodea).</title>
        <authorList>
            <person name="Koehler R."/>
            <person name="Predel R."/>
        </authorList>
    </citation>
    <scope>PROTEIN SEQUENCE</scope>
    <scope>MASS SPECTROMETRY</scope>
    <scope>AMIDATION AT LEU-11</scope>
    <source>
        <tissue evidence="4">Abdominal perisympathetic organs</tissue>
    </source>
</reference>
<accession>P86672</accession>
<evidence type="ECO:0000250" key="1">
    <source>
        <dbReference type="UniProtKB" id="P83923"/>
    </source>
</evidence>
<evidence type="ECO:0000250" key="2">
    <source>
        <dbReference type="UniProtKB" id="P84375"/>
    </source>
</evidence>
<evidence type="ECO:0000255" key="3"/>
<evidence type="ECO:0000269" key="4">
    <source>
    </source>
</evidence>
<evidence type="ECO:0000303" key="5">
    <source>
    </source>
</evidence>
<evidence type="ECO:0000305" key="6"/>
<comment type="function">
    <text evidence="1">Mediates visceral muscle contractile activity (myotropic activity).</text>
</comment>
<comment type="subcellular location">
    <subcellularLocation>
        <location evidence="2">Secreted</location>
    </subcellularLocation>
</comment>
<comment type="mass spectrometry"/>
<comment type="similarity">
    <text evidence="3">Belongs to the periviscerokinin family.</text>
</comment>
<keyword id="KW-0027">Amidation</keyword>
<keyword id="KW-0903">Direct protein sequencing</keyword>
<keyword id="KW-0527">Neuropeptide</keyword>
<keyword id="KW-0964">Secreted</keyword>